<proteinExistence type="inferred from homology"/>
<feature type="chain" id="PRO_1000080540" description="4-hydroxy-tetrahydrodipicolinate synthase">
    <location>
        <begin position="1"/>
        <end position="301"/>
    </location>
</feature>
<feature type="active site" description="Proton donor/acceptor" evidence="1">
    <location>
        <position position="138"/>
    </location>
</feature>
<feature type="active site" description="Schiff-base intermediate with substrate" evidence="1">
    <location>
        <position position="167"/>
    </location>
</feature>
<feature type="binding site" evidence="1">
    <location>
        <position position="50"/>
    </location>
    <ligand>
        <name>pyruvate</name>
        <dbReference type="ChEBI" id="CHEBI:15361"/>
    </ligand>
</feature>
<feature type="binding site" evidence="1">
    <location>
        <position position="209"/>
    </location>
    <ligand>
        <name>pyruvate</name>
        <dbReference type="ChEBI" id="CHEBI:15361"/>
    </ligand>
</feature>
<feature type="site" description="Part of a proton relay during catalysis" evidence="1">
    <location>
        <position position="49"/>
    </location>
</feature>
<feature type="site" description="Part of a proton relay during catalysis" evidence="1">
    <location>
        <position position="112"/>
    </location>
</feature>
<evidence type="ECO:0000255" key="1">
    <source>
        <dbReference type="HAMAP-Rule" id="MF_00418"/>
    </source>
</evidence>
<evidence type="ECO:0000305" key="2"/>
<keyword id="KW-0028">Amino-acid biosynthesis</keyword>
<keyword id="KW-0963">Cytoplasm</keyword>
<keyword id="KW-0220">Diaminopimelate biosynthesis</keyword>
<keyword id="KW-0456">Lyase</keyword>
<keyword id="KW-0457">Lysine biosynthesis</keyword>
<keyword id="KW-1185">Reference proteome</keyword>
<keyword id="KW-0704">Schiff base</keyword>
<organism>
    <name type="scientific">Sorangium cellulosum (strain So ce56)</name>
    <name type="common">Polyangium cellulosum (strain So ce56)</name>
    <dbReference type="NCBI Taxonomy" id="448385"/>
    <lineage>
        <taxon>Bacteria</taxon>
        <taxon>Pseudomonadati</taxon>
        <taxon>Myxococcota</taxon>
        <taxon>Polyangia</taxon>
        <taxon>Polyangiales</taxon>
        <taxon>Polyangiaceae</taxon>
        <taxon>Sorangium</taxon>
    </lineage>
</organism>
<dbReference type="EC" id="4.3.3.7" evidence="1"/>
<dbReference type="EMBL" id="AM746676">
    <property type="protein sequence ID" value="CAN98197.1"/>
    <property type="molecule type" value="Genomic_DNA"/>
</dbReference>
<dbReference type="RefSeq" id="WP_012240636.1">
    <property type="nucleotide sequence ID" value="NC_010162.1"/>
</dbReference>
<dbReference type="SMR" id="A9FHA5"/>
<dbReference type="STRING" id="448385.sce8027"/>
<dbReference type="KEGG" id="scl:sce8027"/>
<dbReference type="eggNOG" id="COG0329">
    <property type="taxonomic scope" value="Bacteria"/>
</dbReference>
<dbReference type="HOGENOM" id="CLU_049343_7_1_7"/>
<dbReference type="OrthoDB" id="9782828at2"/>
<dbReference type="BioCyc" id="SCEL448385:SCE_RS41100-MONOMER"/>
<dbReference type="UniPathway" id="UPA00034">
    <property type="reaction ID" value="UER00017"/>
</dbReference>
<dbReference type="Proteomes" id="UP000002139">
    <property type="component" value="Chromosome"/>
</dbReference>
<dbReference type="GO" id="GO:0005829">
    <property type="term" value="C:cytosol"/>
    <property type="evidence" value="ECO:0007669"/>
    <property type="project" value="TreeGrafter"/>
</dbReference>
<dbReference type="GO" id="GO:0008840">
    <property type="term" value="F:4-hydroxy-tetrahydrodipicolinate synthase activity"/>
    <property type="evidence" value="ECO:0007669"/>
    <property type="project" value="UniProtKB-UniRule"/>
</dbReference>
<dbReference type="GO" id="GO:0019877">
    <property type="term" value="P:diaminopimelate biosynthetic process"/>
    <property type="evidence" value="ECO:0007669"/>
    <property type="project" value="UniProtKB-UniRule"/>
</dbReference>
<dbReference type="GO" id="GO:0009089">
    <property type="term" value="P:lysine biosynthetic process via diaminopimelate"/>
    <property type="evidence" value="ECO:0007669"/>
    <property type="project" value="UniProtKB-UniRule"/>
</dbReference>
<dbReference type="CDD" id="cd00950">
    <property type="entry name" value="DHDPS"/>
    <property type="match status" value="1"/>
</dbReference>
<dbReference type="Gene3D" id="3.20.20.70">
    <property type="entry name" value="Aldolase class I"/>
    <property type="match status" value="1"/>
</dbReference>
<dbReference type="HAMAP" id="MF_00418">
    <property type="entry name" value="DapA"/>
    <property type="match status" value="1"/>
</dbReference>
<dbReference type="InterPro" id="IPR013785">
    <property type="entry name" value="Aldolase_TIM"/>
</dbReference>
<dbReference type="InterPro" id="IPR005263">
    <property type="entry name" value="DapA"/>
</dbReference>
<dbReference type="InterPro" id="IPR002220">
    <property type="entry name" value="DapA-like"/>
</dbReference>
<dbReference type="InterPro" id="IPR020625">
    <property type="entry name" value="Schiff_base-form_aldolases_AS"/>
</dbReference>
<dbReference type="InterPro" id="IPR020624">
    <property type="entry name" value="Schiff_base-form_aldolases_CS"/>
</dbReference>
<dbReference type="NCBIfam" id="TIGR00674">
    <property type="entry name" value="dapA"/>
    <property type="match status" value="1"/>
</dbReference>
<dbReference type="PANTHER" id="PTHR12128:SF66">
    <property type="entry name" value="4-HYDROXY-2-OXOGLUTARATE ALDOLASE, MITOCHONDRIAL"/>
    <property type="match status" value="1"/>
</dbReference>
<dbReference type="PANTHER" id="PTHR12128">
    <property type="entry name" value="DIHYDRODIPICOLINATE SYNTHASE"/>
    <property type="match status" value="1"/>
</dbReference>
<dbReference type="Pfam" id="PF00701">
    <property type="entry name" value="DHDPS"/>
    <property type="match status" value="1"/>
</dbReference>
<dbReference type="PIRSF" id="PIRSF001365">
    <property type="entry name" value="DHDPS"/>
    <property type="match status" value="1"/>
</dbReference>
<dbReference type="PRINTS" id="PR00146">
    <property type="entry name" value="DHPICSNTHASE"/>
</dbReference>
<dbReference type="SMART" id="SM01130">
    <property type="entry name" value="DHDPS"/>
    <property type="match status" value="1"/>
</dbReference>
<dbReference type="SUPFAM" id="SSF51569">
    <property type="entry name" value="Aldolase"/>
    <property type="match status" value="1"/>
</dbReference>
<dbReference type="PROSITE" id="PS00665">
    <property type="entry name" value="DHDPS_1"/>
    <property type="match status" value="1"/>
</dbReference>
<dbReference type="PROSITE" id="PS00666">
    <property type="entry name" value="DHDPS_2"/>
    <property type="match status" value="1"/>
</dbReference>
<reference key="1">
    <citation type="journal article" date="2007" name="Nat. Biotechnol.">
        <title>Complete genome sequence of the myxobacterium Sorangium cellulosum.</title>
        <authorList>
            <person name="Schneiker S."/>
            <person name="Perlova O."/>
            <person name="Kaiser O."/>
            <person name="Gerth K."/>
            <person name="Alici A."/>
            <person name="Altmeyer M.O."/>
            <person name="Bartels D."/>
            <person name="Bekel T."/>
            <person name="Beyer S."/>
            <person name="Bode E."/>
            <person name="Bode H.B."/>
            <person name="Bolten C.J."/>
            <person name="Choudhuri J.V."/>
            <person name="Doss S."/>
            <person name="Elnakady Y.A."/>
            <person name="Frank B."/>
            <person name="Gaigalat L."/>
            <person name="Goesmann A."/>
            <person name="Groeger C."/>
            <person name="Gross F."/>
            <person name="Jelsbak L."/>
            <person name="Jelsbak L."/>
            <person name="Kalinowski J."/>
            <person name="Kegler C."/>
            <person name="Knauber T."/>
            <person name="Konietzny S."/>
            <person name="Kopp M."/>
            <person name="Krause L."/>
            <person name="Krug D."/>
            <person name="Linke B."/>
            <person name="Mahmud T."/>
            <person name="Martinez-Arias R."/>
            <person name="McHardy A.C."/>
            <person name="Merai M."/>
            <person name="Meyer F."/>
            <person name="Mormann S."/>
            <person name="Munoz-Dorado J."/>
            <person name="Perez J."/>
            <person name="Pradella S."/>
            <person name="Rachid S."/>
            <person name="Raddatz G."/>
            <person name="Rosenau F."/>
            <person name="Rueckert C."/>
            <person name="Sasse F."/>
            <person name="Scharfe M."/>
            <person name="Schuster S.C."/>
            <person name="Suen G."/>
            <person name="Treuner-Lange A."/>
            <person name="Velicer G.J."/>
            <person name="Vorholter F.-J."/>
            <person name="Weissman K.J."/>
            <person name="Welch R.D."/>
            <person name="Wenzel S.C."/>
            <person name="Whitworth D.E."/>
            <person name="Wilhelm S."/>
            <person name="Wittmann C."/>
            <person name="Bloecker H."/>
            <person name="Puehler A."/>
            <person name="Mueller R."/>
        </authorList>
    </citation>
    <scope>NUCLEOTIDE SEQUENCE [LARGE SCALE GENOMIC DNA]</scope>
    <source>
        <strain>So ce56</strain>
    </source>
</reference>
<name>DAPA_SORC5</name>
<protein>
    <recommendedName>
        <fullName evidence="1">4-hydroxy-tetrahydrodipicolinate synthase</fullName>
        <shortName evidence="1">HTPA synthase</shortName>
        <ecNumber evidence="1">4.3.3.7</ecNumber>
    </recommendedName>
</protein>
<gene>
    <name evidence="1" type="primary">dapA</name>
    <name type="ordered locus">sce8027</name>
</gene>
<sequence length="301" mass="31168">MSQLPLSGTFTALVTPFTPDGEAVDFDALDALVEAQIAGGVSGLVPCGTTGESPTLSEAETTAVIRRVVEAARGRVPVIAGTGSFSTKKTIEASRAALAAGAAGVMIVMPYYSKPSQDGLREHTLAVARAVPAPIVLYNIPGRTVVDLSAETTERICAAAPNVVAIKDASGNVFRCQELVRRLGDRLTILSGDDALTLAMMALGAQGVISVTSNVLPRETSAVTRRFLAGDLAGARAAHLALLELHGLLFVEPNPAPAKAALAALGRMSAAVRLPLVPAGEATRQQIAEAMRRLEARREAS</sequence>
<comment type="function">
    <text evidence="1">Catalyzes the condensation of (S)-aspartate-beta-semialdehyde [(S)-ASA] and pyruvate to 4-hydroxy-tetrahydrodipicolinate (HTPA).</text>
</comment>
<comment type="catalytic activity">
    <reaction evidence="1">
        <text>L-aspartate 4-semialdehyde + pyruvate = (2S,4S)-4-hydroxy-2,3,4,5-tetrahydrodipicolinate + H2O + H(+)</text>
        <dbReference type="Rhea" id="RHEA:34171"/>
        <dbReference type="ChEBI" id="CHEBI:15361"/>
        <dbReference type="ChEBI" id="CHEBI:15377"/>
        <dbReference type="ChEBI" id="CHEBI:15378"/>
        <dbReference type="ChEBI" id="CHEBI:67139"/>
        <dbReference type="ChEBI" id="CHEBI:537519"/>
        <dbReference type="EC" id="4.3.3.7"/>
    </reaction>
</comment>
<comment type="pathway">
    <text evidence="1">Amino-acid biosynthesis; L-lysine biosynthesis via DAP pathway; (S)-tetrahydrodipicolinate from L-aspartate: step 3/4.</text>
</comment>
<comment type="subunit">
    <text evidence="1">Homotetramer; dimer of dimers.</text>
</comment>
<comment type="subcellular location">
    <subcellularLocation>
        <location evidence="1">Cytoplasm</location>
    </subcellularLocation>
</comment>
<comment type="similarity">
    <text evidence="1">Belongs to the DapA family.</text>
</comment>
<comment type="caution">
    <text evidence="2">Was originally thought to be a dihydrodipicolinate synthase (DHDPS), catalyzing the condensation of (S)-aspartate-beta-semialdehyde [(S)-ASA] and pyruvate to dihydrodipicolinate (DHDP). However, it was shown in E.coli that the product of the enzymatic reaction is not dihydrodipicolinate but in fact (4S)-4-hydroxy-2,3,4,5-tetrahydro-(2S)-dipicolinic acid (HTPA), and that the consecutive dehydration reaction leading to DHDP is not spontaneous but catalyzed by DapB.</text>
</comment>
<accession>A9FHA5</accession>